<gene>
    <name type="primary">rev</name>
</gene>
<organismHost>
    <name type="scientific">Cercopithecidae</name>
    <name type="common">Old World monkeys</name>
    <dbReference type="NCBI Taxonomy" id="9527"/>
</organismHost>
<comment type="function">
    <text evidence="1">Escorts unspliced or incompletely spliced viral pre-mRNAs (late transcripts) out of the nucleus of infected cells. These pre-mRNAs carry a recognition sequence called Rev responsive element (RRE) located in the env gene, that is not present in fully spliced viral mRNAs (early transcripts). This function is essential since most viral proteins are translated from unspliced or partially spliced pre-mRNAs which cannot exit the nucleus by the pathway used by fully processed cellular mRNAs (By similarity).</text>
</comment>
<comment type="subunit">
    <text evidence="1">Homomultimer; when bound to the RRE. Multimeric assembly is essential for activity (By similarity).</text>
</comment>
<comment type="subcellular location">
    <subcellularLocation>
        <location>Host nucleus</location>
        <location>Host nucleolus</location>
    </subcellularLocation>
    <subcellularLocation>
        <location>Host cytoplasm</location>
    </subcellularLocation>
    <text evidence="1">The presence of both nuclear import and nuclear export signals leads to continuous shuttling between the nucleus and cytoplasm.</text>
</comment>
<comment type="domain">
    <text evidence="1">The RNA-binding motif binds to the RRE, a stem-and-loop structure present in incompletely spliced viral pre-mRNAs. This region also contains the NLS which mediates nuclear localization. These overlapping functions prevent Rev bound to RRE from undesirable return to the nucleus. When Rev binds the RRE, the NLS becomes masked while the NES remains accessible (By similarity).</text>
</comment>
<reference key="1">
    <citation type="journal article" date="1987" name="Cell">
        <title>The genome organization of STLV-3 is similar to that of the AIDS virus except for a truncated transmembrane protein.</title>
        <authorList>
            <person name="Hirsch V."/>
            <person name="Riedel N."/>
            <person name="Mullins J.I."/>
        </authorList>
    </citation>
    <scope>NUCLEOTIDE SEQUENCE [GENOMIC RNA]</scope>
</reference>
<name>REV_SIVML</name>
<dbReference type="PIR" id="B26737">
    <property type="entry name" value="VKLJS2"/>
</dbReference>
<dbReference type="SMR" id="P69734"/>
<dbReference type="GO" id="GO:0030430">
    <property type="term" value="C:host cell cytoplasm"/>
    <property type="evidence" value="ECO:0007669"/>
    <property type="project" value="UniProtKB-SubCell"/>
</dbReference>
<dbReference type="GO" id="GO:0044196">
    <property type="term" value="C:host cell nucleolus"/>
    <property type="evidence" value="ECO:0007669"/>
    <property type="project" value="UniProtKB-SubCell"/>
</dbReference>
<dbReference type="GO" id="GO:0003700">
    <property type="term" value="F:DNA-binding transcription factor activity"/>
    <property type="evidence" value="ECO:0007669"/>
    <property type="project" value="InterPro"/>
</dbReference>
<dbReference type="GO" id="GO:0003723">
    <property type="term" value="F:RNA binding"/>
    <property type="evidence" value="ECO:0007669"/>
    <property type="project" value="UniProtKB-KW"/>
</dbReference>
<dbReference type="GO" id="GO:0051028">
    <property type="term" value="P:mRNA transport"/>
    <property type="evidence" value="ECO:0007669"/>
    <property type="project" value="UniProtKB-KW"/>
</dbReference>
<dbReference type="Gene3D" id="6.10.140.630">
    <property type="match status" value="1"/>
</dbReference>
<dbReference type="InterPro" id="IPR000625">
    <property type="entry name" value="REV_protein"/>
</dbReference>
<dbReference type="Pfam" id="PF00424">
    <property type="entry name" value="REV"/>
    <property type="match status" value="1"/>
</dbReference>
<feature type="chain" id="PRO_0000085300" description="Protein Rev">
    <location>
        <begin position="1"/>
        <end position="108"/>
    </location>
</feature>
<feature type="region of interest" description="Homomultimerization" evidence="1">
    <location>
        <begin position="16"/>
        <end position="25"/>
    </location>
</feature>
<feature type="region of interest" description="Disordered" evidence="2">
    <location>
        <begin position="83"/>
        <end position="108"/>
    </location>
</feature>
<feature type="short sequence motif" description="Nuclear localization signal and RNA-binding (RRE)" evidence="1">
    <location>
        <begin position="33"/>
        <end position="49"/>
    </location>
</feature>
<feature type="short sequence motif" description="Nuclear export signal" evidence="1">
    <location>
        <begin position="70"/>
        <end position="82"/>
    </location>
</feature>
<feature type="compositionally biased region" description="Basic and acidic residues" evidence="2">
    <location>
        <begin position="99"/>
        <end position="108"/>
    </location>
</feature>
<evidence type="ECO:0000250" key="1"/>
<evidence type="ECO:0000256" key="2">
    <source>
        <dbReference type="SAM" id="MobiDB-lite"/>
    </source>
</evidence>
<keyword id="KW-1035">Host cytoplasm</keyword>
<keyword id="KW-1048">Host nucleus</keyword>
<keyword id="KW-0509">mRNA transport</keyword>
<keyword id="KW-0694">RNA-binding</keyword>
<keyword id="KW-0813">Transport</keyword>
<accession>P69734</accession>
<accession>P05874</accession>
<accession>P11264</accession>
<protein>
    <recommendedName>
        <fullName>Protein Rev</fullName>
    </recommendedName>
    <alternativeName>
        <fullName>Regulator of expression of viral proteins</fullName>
    </alternativeName>
</protein>
<organism>
    <name type="scientific">Simian immunodeficiency virus (isolate K78)</name>
    <name type="common">SIV-mac</name>
    <name type="synonym">Simian immunodeficiency virus rhesus monkey</name>
    <dbReference type="NCBI Taxonomy" id="11736"/>
    <lineage>
        <taxon>Viruses</taxon>
        <taxon>Riboviria</taxon>
        <taxon>Pararnavirae</taxon>
        <taxon>Artverviricota</taxon>
        <taxon>Revtraviricetes</taxon>
        <taxon>Ortervirales</taxon>
        <taxon>Retroviridae</taxon>
        <taxon>Orthoretrovirinae</taxon>
        <taxon>Lentivirus</taxon>
        <taxon>Simian immunodeficiency virus</taxon>
    </lineage>
</organism>
<sequence length="108" mass="12689">MSSHEREEELRKRLRLIHLLHQTIDSYPTGPGTANQRRQRRRRWRRRWQQLLALADRIYSFPDPPTDTPLDLAIQQLQNLAIESIPDPPTNTPEALCDPTKDSRSPQD</sequence>
<proteinExistence type="inferred from homology"/>